<gene>
    <name type="primary">nst1</name>
    <name type="ORF">An16g04260</name>
</gene>
<name>NST1_ASPNC</name>
<reference key="1">
    <citation type="journal article" date="2007" name="Nat. Biotechnol.">
        <title>Genome sequencing and analysis of the versatile cell factory Aspergillus niger CBS 513.88.</title>
        <authorList>
            <person name="Pel H.J."/>
            <person name="de Winde J.H."/>
            <person name="Archer D.B."/>
            <person name="Dyer P.S."/>
            <person name="Hofmann G."/>
            <person name="Schaap P.J."/>
            <person name="Turner G."/>
            <person name="de Vries R.P."/>
            <person name="Albang R."/>
            <person name="Albermann K."/>
            <person name="Andersen M.R."/>
            <person name="Bendtsen J.D."/>
            <person name="Benen J.A.E."/>
            <person name="van den Berg M."/>
            <person name="Breestraat S."/>
            <person name="Caddick M.X."/>
            <person name="Contreras R."/>
            <person name="Cornell M."/>
            <person name="Coutinho P.M."/>
            <person name="Danchin E.G.J."/>
            <person name="Debets A.J.M."/>
            <person name="Dekker P."/>
            <person name="van Dijck P.W.M."/>
            <person name="van Dijk A."/>
            <person name="Dijkhuizen L."/>
            <person name="Driessen A.J.M."/>
            <person name="d'Enfert C."/>
            <person name="Geysens S."/>
            <person name="Goosen C."/>
            <person name="Groot G.S.P."/>
            <person name="de Groot P.W.J."/>
            <person name="Guillemette T."/>
            <person name="Henrissat B."/>
            <person name="Herweijer M."/>
            <person name="van den Hombergh J.P.T.W."/>
            <person name="van den Hondel C.A.M.J.J."/>
            <person name="van der Heijden R.T.J.M."/>
            <person name="van der Kaaij R.M."/>
            <person name="Klis F.M."/>
            <person name="Kools H.J."/>
            <person name="Kubicek C.P."/>
            <person name="van Kuyk P.A."/>
            <person name="Lauber J."/>
            <person name="Lu X."/>
            <person name="van der Maarel M.J.E.C."/>
            <person name="Meulenberg R."/>
            <person name="Menke H."/>
            <person name="Mortimer M.A."/>
            <person name="Nielsen J."/>
            <person name="Oliver S.G."/>
            <person name="Olsthoorn M."/>
            <person name="Pal K."/>
            <person name="van Peij N.N.M.E."/>
            <person name="Ram A.F.J."/>
            <person name="Rinas U."/>
            <person name="Roubos J.A."/>
            <person name="Sagt C.M.J."/>
            <person name="Schmoll M."/>
            <person name="Sun J."/>
            <person name="Ussery D."/>
            <person name="Varga J."/>
            <person name="Vervecken W."/>
            <person name="van de Vondervoort P.J.J."/>
            <person name="Wedler H."/>
            <person name="Woesten H.A.B."/>
            <person name="Zeng A.-P."/>
            <person name="van Ooyen A.J.J."/>
            <person name="Visser J."/>
            <person name="Stam H."/>
        </authorList>
    </citation>
    <scope>NUCLEOTIDE SEQUENCE [LARGE SCALE GENOMIC DNA]</scope>
    <source>
        <strain>ATCC MYA-4892 / CBS 513.88 / FGSC A1513</strain>
    </source>
</reference>
<comment type="function">
    <text evidence="1">May act as a negative regulator of salt tolerance.</text>
</comment>
<comment type="subcellular location">
    <subcellularLocation>
        <location evidence="1">Cytoplasm</location>
    </subcellularLocation>
</comment>
<comment type="similarity">
    <text evidence="4">Belongs to the NST1 family.</text>
</comment>
<keyword id="KW-0175">Coiled coil</keyword>
<keyword id="KW-0963">Cytoplasm</keyword>
<keyword id="KW-1185">Reference proteome</keyword>
<keyword id="KW-0346">Stress response</keyword>
<organism>
    <name type="scientific">Aspergillus niger (strain ATCC MYA-4892 / CBS 513.88 / FGSC A1513)</name>
    <dbReference type="NCBI Taxonomy" id="425011"/>
    <lineage>
        <taxon>Eukaryota</taxon>
        <taxon>Fungi</taxon>
        <taxon>Dikarya</taxon>
        <taxon>Ascomycota</taxon>
        <taxon>Pezizomycotina</taxon>
        <taxon>Eurotiomycetes</taxon>
        <taxon>Eurotiomycetidae</taxon>
        <taxon>Eurotiales</taxon>
        <taxon>Aspergillaceae</taxon>
        <taxon>Aspergillus</taxon>
        <taxon>Aspergillus subgen. Circumdati</taxon>
    </lineage>
</organism>
<accession>A2R7P5</accession>
<sequence>MSDPASTSIPAHATNGEAHAPNDHHHAQLPLSDSKPVSVNRKKQKRRQKQAARLAAERQFGNGHISADMSEQNGLSPTAPASHVSDDHDLDERANGETYYEEIHDATHDLDDHPPNLSNGQPGQQNATARKSKKKKGKKNRAGSQTMGDESSTPLSTPSVSMSQHLPPPLPSHLPHTLLKTSKDRSIWNTSTQEERENIKTFWLELGEEERRQLVKVEKDAVLKKMKEQQKHSCSCTVCGRKRTAIEEELEVLYDAYYEELEQYANNNQGSFEKGPPMVPPPRLYHPPLRSPGQHTRTQGQFHPSRGRIHELPEDDEDLEEDYDEDDEDDEPYSDDEYEDEETRAARADFFAFGNSLTVKGRRQIMLLSFIFPKPVTNLIFTLADGILTVADDLLKNDGKHFIDMMEQLAERRMQREEDTQYGIAAAHQSLHGGHNHGPLDDDDYDEEEDEDYDSQEDEDYEEDEMVSSGNWPGGDAVQADSFLQDAMTEEQRMEEGRRMFQIFAARMFEQRVLTAYREKVAEQRQQKLIEELMEEQTRNEQRNAKKAREAQKRKDKKKLQKQAKEEEKARREAEKAAEEAAAKAEQEKKLEEQRRKREEQKKKREAERKAQEAERLRKEAEKQKRLREERERQAEIERKQREQKELEKKRREEARQNELREKKTKDERERKLREAAPKTDYEGQEKRDPQAKRVSHTGPVPIPASLQHAQALPAYLQSPHYQIATPIVPKAPTPARPRQPSQQGSHTSSPRSQPASTEPSQVSISPRSMAPSQSSGASSVTSKQGHGQPPLLHHPQPSTPLSPLGALNRSHPPGFSPSNPPGLGLVARPPIGHELPSYPPHSGPLMNQLRGFPAPNGLPVLPGMNGTRPMPPGRGFPLDPGHGLAFHQQPIANAFAAQPSGLSHAHSRQPSSSFERSPLDAHAFPISRPSPIKRPSSTQQDQNNRSAQRDVDDLSAHLGSSALLDDSDVPFTSNLSQSLPGATAPGTLPGPTRASFAGTSLFADPLAAKHSGFPIGPSVGNTWSTQIPFGTSPFPSAPTWGTGPGSGWSNNAFAPGGHHRAHTSRPVTIRLLVIQACKQLNMMSPSKGASGYHDVKVVLRQVDQLRPVNEPPISLKEMLDICDTEGNSQNGGGSFSIRSDETGECVKFEPDTNSASSGHRGSIVPGEIGSPVPSSSLPAFGGIGSSTPSVLRQFSSPTGF</sequence>
<proteinExistence type="inferred from homology"/>
<feature type="chain" id="PRO_0000324441" description="Stress response protein nst1">
    <location>
        <begin position="1"/>
        <end position="1201"/>
    </location>
</feature>
<feature type="region of interest" description="Disordered" evidence="3">
    <location>
        <begin position="1"/>
        <end position="178"/>
    </location>
</feature>
<feature type="region of interest" description="Disordered" evidence="3">
    <location>
        <begin position="268"/>
        <end position="341"/>
    </location>
</feature>
<feature type="region of interest" description="Disordered" evidence="3">
    <location>
        <begin position="429"/>
        <end position="478"/>
    </location>
</feature>
<feature type="region of interest" description="Disordered" evidence="3">
    <location>
        <begin position="535"/>
        <end position="707"/>
    </location>
</feature>
<feature type="region of interest" description="Disordered" evidence="3">
    <location>
        <begin position="724"/>
        <end position="848"/>
    </location>
</feature>
<feature type="region of interest" description="Disordered" evidence="3">
    <location>
        <begin position="899"/>
        <end position="952"/>
    </location>
</feature>
<feature type="region of interest" description="Disordered" evidence="3">
    <location>
        <begin position="1150"/>
        <end position="1169"/>
    </location>
</feature>
<feature type="coiled-coil region" evidence="2">
    <location>
        <begin position="520"/>
        <end position="673"/>
    </location>
</feature>
<feature type="compositionally biased region" description="Basic residues" evidence="3">
    <location>
        <begin position="40"/>
        <end position="50"/>
    </location>
</feature>
<feature type="compositionally biased region" description="Basic and acidic residues" evidence="3">
    <location>
        <begin position="84"/>
        <end position="114"/>
    </location>
</feature>
<feature type="compositionally biased region" description="Polar residues" evidence="3">
    <location>
        <begin position="116"/>
        <end position="128"/>
    </location>
</feature>
<feature type="compositionally biased region" description="Basic residues" evidence="3">
    <location>
        <begin position="130"/>
        <end position="141"/>
    </location>
</feature>
<feature type="compositionally biased region" description="Polar residues" evidence="3">
    <location>
        <begin position="145"/>
        <end position="164"/>
    </location>
</feature>
<feature type="compositionally biased region" description="Polar residues" evidence="3">
    <location>
        <begin position="293"/>
        <end position="302"/>
    </location>
</feature>
<feature type="compositionally biased region" description="Acidic residues" evidence="3">
    <location>
        <begin position="313"/>
        <end position="341"/>
    </location>
</feature>
<feature type="compositionally biased region" description="Acidic residues" evidence="3">
    <location>
        <begin position="441"/>
        <end position="466"/>
    </location>
</feature>
<feature type="compositionally biased region" description="Basic and acidic residues" evidence="3">
    <location>
        <begin position="535"/>
        <end position="553"/>
    </location>
</feature>
<feature type="compositionally biased region" description="Basic and acidic residues" evidence="3">
    <location>
        <begin position="563"/>
        <end position="692"/>
    </location>
</feature>
<feature type="compositionally biased region" description="Polar residues" evidence="3">
    <location>
        <begin position="740"/>
        <end position="767"/>
    </location>
</feature>
<feature type="compositionally biased region" description="Low complexity" evidence="3">
    <location>
        <begin position="769"/>
        <end position="805"/>
    </location>
</feature>
<feature type="compositionally biased region" description="Low complexity" evidence="3">
    <location>
        <begin position="926"/>
        <end position="938"/>
    </location>
</feature>
<protein>
    <recommendedName>
        <fullName>Stress response protein nst1</fullName>
    </recommendedName>
</protein>
<evidence type="ECO:0000250" key="1"/>
<evidence type="ECO:0000255" key="2"/>
<evidence type="ECO:0000256" key="3">
    <source>
        <dbReference type="SAM" id="MobiDB-lite"/>
    </source>
</evidence>
<evidence type="ECO:0000305" key="4"/>
<dbReference type="EMBL" id="AM270368">
    <property type="protein sequence ID" value="CAK46843.1"/>
    <property type="molecule type" value="Genomic_DNA"/>
</dbReference>
<dbReference type="SMR" id="A2R7P5"/>
<dbReference type="EnsemblFungi" id="CAK46843">
    <property type="protein sequence ID" value="CAK46843"/>
    <property type="gene ID" value="An16g04260"/>
</dbReference>
<dbReference type="VEuPathDB" id="FungiDB:An16g04260"/>
<dbReference type="HOGENOM" id="CLU_002935_0_1_1"/>
<dbReference type="Proteomes" id="UP000006706">
    <property type="component" value="Chromosome 5R"/>
</dbReference>
<dbReference type="GO" id="GO:0005737">
    <property type="term" value="C:cytoplasm"/>
    <property type="evidence" value="ECO:0007669"/>
    <property type="project" value="UniProtKB-SubCell"/>
</dbReference>
<dbReference type="InterPro" id="IPR051195">
    <property type="entry name" value="Fungal_stress_NST1"/>
</dbReference>
<dbReference type="InterPro" id="IPR025279">
    <property type="entry name" value="NST1"/>
</dbReference>
<dbReference type="PANTHER" id="PTHR31780:SF10">
    <property type="entry name" value="LD36051P"/>
    <property type="match status" value="1"/>
</dbReference>
<dbReference type="PANTHER" id="PTHR31780">
    <property type="entry name" value="STRESS RESPONSE PROTEIN NST1-RELATED"/>
    <property type="match status" value="1"/>
</dbReference>
<dbReference type="Pfam" id="PF13945">
    <property type="entry name" value="NST1"/>
    <property type="match status" value="1"/>
</dbReference>